<organism>
    <name type="scientific">Dictyostelium discoideum</name>
    <name type="common">Social amoeba</name>
    <dbReference type="NCBI Taxonomy" id="44689"/>
    <lineage>
        <taxon>Eukaryota</taxon>
        <taxon>Amoebozoa</taxon>
        <taxon>Evosea</taxon>
        <taxon>Eumycetozoa</taxon>
        <taxon>Dictyostelia</taxon>
        <taxon>Dictyosteliales</taxon>
        <taxon>Dictyosteliaceae</taxon>
        <taxon>Dictyostelium</taxon>
    </lineage>
</organism>
<feature type="chain" id="PRO_0000328523" description="Exportin-7">
    <location>
        <begin position="1"/>
        <end position="1007"/>
    </location>
</feature>
<proteinExistence type="inferred from homology"/>
<accession>Q54DN3</accession>
<gene>
    <name type="primary">xpo7</name>
    <name type="synonym">Ranbp7</name>
    <name type="ORF">DDB_G0291986</name>
</gene>
<reference key="1">
    <citation type="journal article" date="2005" name="Nature">
        <title>The genome of the social amoeba Dictyostelium discoideum.</title>
        <authorList>
            <person name="Eichinger L."/>
            <person name="Pachebat J.A."/>
            <person name="Gloeckner G."/>
            <person name="Rajandream M.A."/>
            <person name="Sucgang R."/>
            <person name="Berriman M."/>
            <person name="Song J."/>
            <person name="Olsen R."/>
            <person name="Szafranski K."/>
            <person name="Xu Q."/>
            <person name="Tunggal B."/>
            <person name="Kummerfeld S."/>
            <person name="Madera M."/>
            <person name="Konfortov B.A."/>
            <person name="Rivero F."/>
            <person name="Bankier A.T."/>
            <person name="Lehmann R."/>
            <person name="Hamlin N."/>
            <person name="Davies R."/>
            <person name="Gaudet P."/>
            <person name="Fey P."/>
            <person name="Pilcher K."/>
            <person name="Chen G."/>
            <person name="Saunders D."/>
            <person name="Sodergren E.J."/>
            <person name="Davis P."/>
            <person name="Kerhornou A."/>
            <person name="Nie X."/>
            <person name="Hall N."/>
            <person name="Anjard C."/>
            <person name="Hemphill L."/>
            <person name="Bason N."/>
            <person name="Farbrother P."/>
            <person name="Desany B."/>
            <person name="Just E."/>
            <person name="Morio T."/>
            <person name="Rost R."/>
            <person name="Churcher C.M."/>
            <person name="Cooper J."/>
            <person name="Haydock S."/>
            <person name="van Driessche N."/>
            <person name="Cronin A."/>
            <person name="Goodhead I."/>
            <person name="Muzny D.M."/>
            <person name="Mourier T."/>
            <person name="Pain A."/>
            <person name="Lu M."/>
            <person name="Harper D."/>
            <person name="Lindsay R."/>
            <person name="Hauser H."/>
            <person name="James K.D."/>
            <person name="Quiles M."/>
            <person name="Madan Babu M."/>
            <person name="Saito T."/>
            <person name="Buchrieser C."/>
            <person name="Wardroper A."/>
            <person name="Felder M."/>
            <person name="Thangavelu M."/>
            <person name="Johnson D."/>
            <person name="Knights A."/>
            <person name="Loulseged H."/>
            <person name="Mungall K.L."/>
            <person name="Oliver K."/>
            <person name="Price C."/>
            <person name="Quail M.A."/>
            <person name="Urushihara H."/>
            <person name="Hernandez J."/>
            <person name="Rabbinowitsch E."/>
            <person name="Steffen D."/>
            <person name="Sanders M."/>
            <person name="Ma J."/>
            <person name="Kohara Y."/>
            <person name="Sharp S."/>
            <person name="Simmonds M.N."/>
            <person name="Spiegler S."/>
            <person name="Tivey A."/>
            <person name="Sugano S."/>
            <person name="White B."/>
            <person name="Walker D."/>
            <person name="Woodward J.R."/>
            <person name="Winckler T."/>
            <person name="Tanaka Y."/>
            <person name="Shaulsky G."/>
            <person name="Schleicher M."/>
            <person name="Weinstock G.M."/>
            <person name="Rosenthal A."/>
            <person name="Cox E.C."/>
            <person name="Chisholm R.L."/>
            <person name="Gibbs R.A."/>
            <person name="Loomis W.F."/>
            <person name="Platzer M."/>
            <person name="Kay R.R."/>
            <person name="Williams J.G."/>
            <person name="Dear P.H."/>
            <person name="Noegel A.A."/>
            <person name="Barrell B.G."/>
            <person name="Kuspa A."/>
        </authorList>
    </citation>
    <scope>NUCLEOTIDE SEQUENCE [LARGE SCALE GENOMIC DNA]</scope>
    <source>
        <strain>AX4</strain>
    </source>
</reference>
<protein>
    <recommendedName>
        <fullName>Exportin-7</fullName>
        <shortName>Exp7</shortName>
    </recommendedName>
</protein>
<sequence>MSIQSEQDFFKFEELCKDFYLKPEETIKIDDILHQYFLNPNFLIEYKQILSFTKNSYVVAQVIRGLIKCVTSFWTSLTPNQKNDMSKSIEHHCIGLRILKDIISEFNEYIGEHLTVLQHRNISISLRDNILLDIFCISLESLNYALANSMDEKFKSIKELALDLSYSCLSFDFIKTTSIDSSEEILTVQIPSQWKSTFDENNPLELFFKIYKQYHSTKSLECILQIVSIRRSFFTTEDERVKFLASIVQYTTEILKSNIGFNEPNNHLVFSRVIERLKTNYHLNNLVTVVGYNDWISNLSTFTIDTLKNPQFSPNSIYFLLTLWAKLVSSIIYVKGDPSKTYLEKYSPIIMESFINSKIDNSYSDEEDEHLMDYEKMVEILEGIPHLGRITYQATCRQIILLFDSISSKFLNETNPTQLEVYERQCAWLVYIIGCLILGRTSINSSEEHDKIDGELSVRVFILIGYNDKKLSAESNTQYQYRTSRISLELSFIYFMQNFRRIYIGENSISSSKIYQRISELSGPTDHTSVLFSIVQKIGFNFKYWAENDEIIKKSLDMFWESVNGHSTSKMLIDNKITKDILKTHSSQVFPFLEKNSNPRNRTSLYKTIGKLLFTDENMGFFDEFIAPFDDTIKHLLNISTPEQFRTEEIKRKVIGLLRDLRGIITSANSKRSYLLFFEWIHLNFSEVLIKIINVWVDSPEVTTSLLKFISEFVFNRQSRLIFDSSSANGFIIFRDTSKILVSYASLILKANISKQDLYKFKIKGIQTSMLLFTRCLVGGYCNFGVFELYGDPSFTSAIDYIFQLCLSVSLDELMSFPKASKAYVTMLEALCLGHTLSIIQLNQQYFIHIMKSLHRCLDSQDVTMSSSSCTSIEKIITVCYYHLKKKNSQCLQAIHQNFFSNSNILYEIIDKIISIIIYEDNFNQFMFSKLLLTCIIFHQDTFTTLKQKYIHSFNSQCPEKVEKAFVQLMENTLDNLETKNKDKFTSNVSIFRKEMKLISSSTGRYL</sequence>
<evidence type="ECO:0000250" key="1"/>
<evidence type="ECO:0000305" key="2"/>
<name>XPO7_DICDI</name>
<keyword id="KW-0963">Cytoplasm</keyword>
<keyword id="KW-0509">mRNA transport</keyword>
<keyword id="KW-0906">Nuclear pore complex</keyword>
<keyword id="KW-0539">Nucleus</keyword>
<keyword id="KW-0653">Protein transport</keyword>
<keyword id="KW-1185">Reference proteome</keyword>
<keyword id="KW-0811">Translocation</keyword>
<keyword id="KW-0813">Transport</keyword>
<comment type="function">
    <text evidence="1">Mediates the nuclear export of proteins (cargos) with broad substrate specificity.</text>
</comment>
<comment type="subcellular location">
    <subcellularLocation>
        <location evidence="1">Nucleus</location>
    </subcellularLocation>
    <subcellularLocation>
        <location evidence="1">Cytoplasm</location>
    </subcellularLocation>
    <subcellularLocation>
        <location evidence="1">Nucleus</location>
        <location evidence="1">Nuclear pore complex</location>
    </subcellularLocation>
    <text evidence="1">Shuttles between the nucleus and the cytoplasm.</text>
</comment>
<comment type="similarity">
    <text evidence="2">Belongs to the exportin family.</text>
</comment>
<dbReference type="EMBL" id="AAFI02000187">
    <property type="protein sequence ID" value="EAL61349.2"/>
    <property type="molecule type" value="Genomic_DNA"/>
</dbReference>
<dbReference type="RefSeq" id="XP_629839.2">
    <property type="nucleotide sequence ID" value="XM_629837.3"/>
</dbReference>
<dbReference type="SMR" id="Q54DN3"/>
<dbReference type="FunCoup" id="Q54DN3">
    <property type="interactions" value="920"/>
</dbReference>
<dbReference type="STRING" id="44689.Q54DN3"/>
<dbReference type="PaxDb" id="44689-DDB0233670"/>
<dbReference type="ABCD" id="Q54DN3">
    <property type="antibodies" value="2 sequenced antibodies"/>
</dbReference>
<dbReference type="EnsemblProtists" id="EAL61349">
    <property type="protein sequence ID" value="EAL61349"/>
    <property type="gene ID" value="DDB_G0291986"/>
</dbReference>
<dbReference type="GeneID" id="8628520"/>
<dbReference type="KEGG" id="ddi:DDB_G0291986"/>
<dbReference type="dictyBase" id="DDB_G0291986">
    <property type="gene designation" value="xpo7"/>
</dbReference>
<dbReference type="VEuPathDB" id="AmoebaDB:DDB_G0291986"/>
<dbReference type="eggNOG" id="KOG1410">
    <property type="taxonomic scope" value="Eukaryota"/>
</dbReference>
<dbReference type="HOGENOM" id="CLU_005409_1_1_1"/>
<dbReference type="InParanoid" id="Q54DN3"/>
<dbReference type="OMA" id="DCFHELC"/>
<dbReference type="PhylomeDB" id="Q54DN3"/>
<dbReference type="PRO" id="PR:Q54DN3"/>
<dbReference type="Proteomes" id="UP000002195">
    <property type="component" value="Chromosome 6"/>
</dbReference>
<dbReference type="GO" id="GO:0005737">
    <property type="term" value="C:cytoplasm"/>
    <property type="evidence" value="ECO:0000318"/>
    <property type="project" value="GO_Central"/>
</dbReference>
<dbReference type="GO" id="GO:0005643">
    <property type="term" value="C:nuclear pore"/>
    <property type="evidence" value="ECO:0000318"/>
    <property type="project" value="GO_Central"/>
</dbReference>
<dbReference type="GO" id="GO:0005634">
    <property type="term" value="C:nucleus"/>
    <property type="evidence" value="ECO:0000250"/>
    <property type="project" value="dictyBase"/>
</dbReference>
<dbReference type="GO" id="GO:0005049">
    <property type="term" value="F:nuclear export signal receptor activity"/>
    <property type="evidence" value="ECO:0000250"/>
    <property type="project" value="dictyBase"/>
</dbReference>
<dbReference type="GO" id="GO:0051028">
    <property type="term" value="P:mRNA transport"/>
    <property type="evidence" value="ECO:0007669"/>
    <property type="project" value="UniProtKB-KW"/>
</dbReference>
<dbReference type="GO" id="GO:0006611">
    <property type="term" value="P:protein export from nucleus"/>
    <property type="evidence" value="ECO:0000250"/>
    <property type="project" value="dictyBase"/>
</dbReference>
<dbReference type="InterPro" id="IPR016024">
    <property type="entry name" value="ARM-type_fold"/>
</dbReference>
<dbReference type="InterPro" id="IPR044189">
    <property type="entry name" value="XPO4/7-like"/>
</dbReference>
<dbReference type="PANTHER" id="PTHR12596">
    <property type="entry name" value="EXPORTIN 4,7-RELATED"/>
    <property type="match status" value="1"/>
</dbReference>
<dbReference type="PANTHER" id="PTHR12596:SF2">
    <property type="entry name" value="EXPORTIN-7 ISOFORM X1"/>
    <property type="match status" value="1"/>
</dbReference>
<dbReference type="SUPFAM" id="SSF48371">
    <property type="entry name" value="ARM repeat"/>
    <property type="match status" value="1"/>
</dbReference>